<feature type="chain" id="PRO_0000077140" description="Large ribosomal subunit protein uL3">
    <location>
        <begin position="1"/>
        <end position="211"/>
    </location>
</feature>
<feature type="modified residue" description="N5-methylglutamine" evidence="1">
    <location>
        <position position="150"/>
    </location>
</feature>
<comment type="function">
    <text evidence="1">One of the primary rRNA binding proteins, it binds directly near the 3'-end of the 23S rRNA, where it nucleates assembly of the 50S subunit.</text>
</comment>
<comment type="subunit">
    <text evidence="1">Part of the 50S ribosomal subunit. Forms a cluster with proteins L14 and L19.</text>
</comment>
<comment type="PTM">
    <text evidence="1">Methylated by PrmB.</text>
</comment>
<comment type="similarity">
    <text evidence="1">Belongs to the universal ribosomal protein uL3 family.</text>
</comment>
<name>RL3_PSESM</name>
<keyword id="KW-0488">Methylation</keyword>
<keyword id="KW-1185">Reference proteome</keyword>
<keyword id="KW-0687">Ribonucleoprotein</keyword>
<keyword id="KW-0689">Ribosomal protein</keyword>
<keyword id="KW-0694">RNA-binding</keyword>
<keyword id="KW-0699">rRNA-binding</keyword>
<gene>
    <name evidence="1" type="primary">rplC</name>
    <name type="ordered locus">PSPTO_0626</name>
</gene>
<accession>Q889X1</accession>
<organism>
    <name type="scientific">Pseudomonas syringae pv. tomato (strain ATCC BAA-871 / DC3000)</name>
    <dbReference type="NCBI Taxonomy" id="223283"/>
    <lineage>
        <taxon>Bacteria</taxon>
        <taxon>Pseudomonadati</taxon>
        <taxon>Pseudomonadota</taxon>
        <taxon>Gammaproteobacteria</taxon>
        <taxon>Pseudomonadales</taxon>
        <taxon>Pseudomonadaceae</taxon>
        <taxon>Pseudomonas</taxon>
    </lineage>
</organism>
<dbReference type="EMBL" id="AE016853">
    <property type="protein sequence ID" value="AAO54168.1"/>
    <property type="molecule type" value="Genomic_DNA"/>
</dbReference>
<dbReference type="RefSeq" id="NP_790473.1">
    <property type="nucleotide sequence ID" value="NC_004578.1"/>
</dbReference>
<dbReference type="RefSeq" id="WP_004397052.1">
    <property type="nucleotide sequence ID" value="NC_004578.1"/>
</dbReference>
<dbReference type="SMR" id="Q889X1"/>
<dbReference type="STRING" id="223283.PSPTO_0626"/>
<dbReference type="GeneID" id="61790276"/>
<dbReference type="KEGG" id="pst:PSPTO_0626"/>
<dbReference type="PATRIC" id="fig|223283.9.peg.632"/>
<dbReference type="eggNOG" id="COG0087">
    <property type="taxonomic scope" value="Bacteria"/>
</dbReference>
<dbReference type="HOGENOM" id="CLU_044142_4_1_6"/>
<dbReference type="OrthoDB" id="9806135at2"/>
<dbReference type="PhylomeDB" id="Q889X1"/>
<dbReference type="Proteomes" id="UP000002515">
    <property type="component" value="Chromosome"/>
</dbReference>
<dbReference type="GO" id="GO:0022625">
    <property type="term" value="C:cytosolic large ribosomal subunit"/>
    <property type="evidence" value="ECO:0007669"/>
    <property type="project" value="TreeGrafter"/>
</dbReference>
<dbReference type="GO" id="GO:0019843">
    <property type="term" value="F:rRNA binding"/>
    <property type="evidence" value="ECO:0007669"/>
    <property type="project" value="UniProtKB-UniRule"/>
</dbReference>
<dbReference type="GO" id="GO:0003735">
    <property type="term" value="F:structural constituent of ribosome"/>
    <property type="evidence" value="ECO:0007669"/>
    <property type="project" value="InterPro"/>
</dbReference>
<dbReference type="GO" id="GO:0006412">
    <property type="term" value="P:translation"/>
    <property type="evidence" value="ECO:0007669"/>
    <property type="project" value="UniProtKB-UniRule"/>
</dbReference>
<dbReference type="FunFam" id="2.40.30.10:FF:000004">
    <property type="entry name" value="50S ribosomal protein L3"/>
    <property type="match status" value="1"/>
</dbReference>
<dbReference type="FunFam" id="3.30.160.810:FF:000001">
    <property type="entry name" value="50S ribosomal protein L3"/>
    <property type="match status" value="1"/>
</dbReference>
<dbReference type="Gene3D" id="3.30.160.810">
    <property type="match status" value="1"/>
</dbReference>
<dbReference type="Gene3D" id="2.40.30.10">
    <property type="entry name" value="Translation factors"/>
    <property type="match status" value="1"/>
</dbReference>
<dbReference type="HAMAP" id="MF_01325_B">
    <property type="entry name" value="Ribosomal_uL3_B"/>
    <property type="match status" value="1"/>
</dbReference>
<dbReference type="InterPro" id="IPR000597">
    <property type="entry name" value="Ribosomal_uL3"/>
</dbReference>
<dbReference type="InterPro" id="IPR019927">
    <property type="entry name" value="Ribosomal_uL3_bac/org-type"/>
</dbReference>
<dbReference type="InterPro" id="IPR019926">
    <property type="entry name" value="Ribosomal_uL3_CS"/>
</dbReference>
<dbReference type="InterPro" id="IPR009000">
    <property type="entry name" value="Transl_B-barrel_sf"/>
</dbReference>
<dbReference type="NCBIfam" id="TIGR03625">
    <property type="entry name" value="L3_bact"/>
    <property type="match status" value="1"/>
</dbReference>
<dbReference type="PANTHER" id="PTHR11229">
    <property type="entry name" value="50S RIBOSOMAL PROTEIN L3"/>
    <property type="match status" value="1"/>
</dbReference>
<dbReference type="PANTHER" id="PTHR11229:SF16">
    <property type="entry name" value="LARGE RIBOSOMAL SUBUNIT PROTEIN UL3C"/>
    <property type="match status" value="1"/>
</dbReference>
<dbReference type="Pfam" id="PF00297">
    <property type="entry name" value="Ribosomal_L3"/>
    <property type="match status" value="1"/>
</dbReference>
<dbReference type="SUPFAM" id="SSF50447">
    <property type="entry name" value="Translation proteins"/>
    <property type="match status" value="1"/>
</dbReference>
<dbReference type="PROSITE" id="PS00474">
    <property type="entry name" value="RIBOSOMAL_L3"/>
    <property type="match status" value="1"/>
</dbReference>
<reference key="1">
    <citation type="journal article" date="2003" name="Proc. Natl. Acad. Sci. U.S.A.">
        <title>The complete genome sequence of the Arabidopsis and tomato pathogen Pseudomonas syringae pv. tomato DC3000.</title>
        <authorList>
            <person name="Buell C.R."/>
            <person name="Joardar V."/>
            <person name="Lindeberg M."/>
            <person name="Selengut J."/>
            <person name="Paulsen I.T."/>
            <person name="Gwinn M.L."/>
            <person name="Dodson R.J."/>
            <person name="DeBoy R.T."/>
            <person name="Durkin A.S."/>
            <person name="Kolonay J.F."/>
            <person name="Madupu R."/>
            <person name="Daugherty S.C."/>
            <person name="Brinkac L.M."/>
            <person name="Beanan M.J."/>
            <person name="Haft D.H."/>
            <person name="Nelson W.C."/>
            <person name="Davidsen T.M."/>
            <person name="Zafar N."/>
            <person name="Zhou L."/>
            <person name="Liu J."/>
            <person name="Yuan Q."/>
            <person name="Khouri H.M."/>
            <person name="Fedorova N.B."/>
            <person name="Tran B."/>
            <person name="Russell D."/>
            <person name="Berry K.J."/>
            <person name="Utterback T.R."/>
            <person name="Van Aken S.E."/>
            <person name="Feldblyum T.V."/>
            <person name="D'Ascenzo M."/>
            <person name="Deng W.-L."/>
            <person name="Ramos A.R."/>
            <person name="Alfano J.R."/>
            <person name="Cartinhour S."/>
            <person name="Chatterjee A.K."/>
            <person name="Delaney T.P."/>
            <person name="Lazarowitz S.G."/>
            <person name="Martin G.B."/>
            <person name="Schneider D.J."/>
            <person name="Tang X."/>
            <person name="Bender C.L."/>
            <person name="White O."/>
            <person name="Fraser C.M."/>
            <person name="Collmer A."/>
        </authorList>
    </citation>
    <scope>NUCLEOTIDE SEQUENCE [LARGE SCALE GENOMIC DNA]</scope>
    <source>
        <strain>ATCC BAA-871 / DC3000</strain>
    </source>
</reference>
<evidence type="ECO:0000255" key="1">
    <source>
        <dbReference type="HAMAP-Rule" id="MF_01325"/>
    </source>
</evidence>
<evidence type="ECO:0000305" key="2"/>
<proteinExistence type="inferred from homology"/>
<sequence length="211" mass="22607">MTIGVVGRKCGMTRIFTEEGVSIPVTVIEIEPNRVTQFKTEETDGYRAVQVTVGERRASRVTAAQAGHFAKANVAAGRTVMEFRLEEGEYQAGDQINAEIFAAGQLVDVTGQSKGKGFQGTIKRWNFRGQDNTHGNSVSHRVPGSIGQCQTPGRVFKGKKMSGHMGAERVTVQSLEVVRVDAERNLLLVKGAVPGATGGNLVVRPAAKARG</sequence>
<protein>
    <recommendedName>
        <fullName evidence="1">Large ribosomal subunit protein uL3</fullName>
    </recommendedName>
    <alternativeName>
        <fullName evidence="2">50S ribosomal protein L3</fullName>
    </alternativeName>
</protein>